<protein>
    <recommendedName>
        <fullName>Nucleolar protein 56</fullName>
    </recommendedName>
    <alternativeName>
        <fullName>Nucleolar protein 5A</fullName>
    </alternativeName>
</protein>
<name>NOP56_MOUSE</name>
<keyword id="KW-0007">Acetylation</keyword>
<keyword id="KW-0963">Cytoplasm</keyword>
<keyword id="KW-1017">Isopeptide bond</keyword>
<keyword id="KW-0488">Methylation</keyword>
<keyword id="KW-0539">Nucleus</keyword>
<keyword id="KW-0597">Phosphoprotein</keyword>
<keyword id="KW-1185">Reference proteome</keyword>
<keyword id="KW-0687">Ribonucleoprotein</keyword>
<keyword id="KW-0690">Ribosome biogenesis</keyword>
<keyword id="KW-0832">Ubl conjugation</keyword>
<organism>
    <name type="scientific">Mus musculus</name>
    <name type="common">Mouse</name>
    <dbReference type="NCBI Taxonomy" id="10090"/>
    <lineage>
        <taxon>Eukaryota</taxon>
        <taxon>Metazoa</taxon>
        <taxon>Chordata</taxon>
        <taxon>Craniata</taxon>
        <taxon>Vertebrata</taxon>
        <taxon>Euteleostomi</taxon>
        <taxon>Mammalia</taxon>
        <taxon>Eutheria</taxon>
        <taxon>Euarchontoglires</taxon>
        <taxon>Glires</taxon>
        <taxon>Rodentia</taxon>
        <taxon>Myomorpha</taxon>
        <taxon>Muroidea</taxon>
        <taxon>Muridae</taxon>
        <taxon>Murinae</taxon>
        <taxon>Mus</taxon>
        <taxon>Mus</taxon>
    </lineage>
</organism>
<reference key="1">
    <citation type="journal article" date="2005" name="Science">
        <title>The transcriptional landscape of the mammalian genome.</title>
        <authorList>
            <person name="Carninci P."/>
            <person name="Kasukawa T."/>
            <person name="Katayama S."/>
            <person name="Gough J."/>
            <person name="Frith M.C."/>
            <person name="Maeda N."/>
            <person name="Oyama R."/>
            <person name="Ravasi T."/>
            <person name="Lenhard B."/>
            <person name="Wells C."/>
            <person name="Kodzius R."/>
            <person name="Shimokawa K."/>
            <person name="Bajic V.B."/>
            <person name="Brenner S.E."/>
            <person name="Batalov S."/>
            <person name="Forrest A.R."/>
            <person name="Zavolan M."/>
            <person name="Davis M.J."/>
            <person name="Wilming L.G."/>
            <person name="Aidinis V."/>
            <person name="Allen J.E."/>
            <person name="Ambesi-Impiombato A."/>
            <person name="Apweiler R."/>
            <person name="Aturaliya R.N."/>
            <person name="Bailey T.L."/>
            <person name="Bansal M."/>
            <person name="Baxter L."/>
            <person name="Beisel K.W."/>
            <person name="Bersano T."/>
            <person name="Bono H."/>
            <person name="Chalk A.M."/>
            <person name="Chiu K.P."/>
            <person name="Choudhary V."/>
            <person name="Christoffels A."/>
            <person name="Clutterbuck D.R."/>
            <person name="Crowe M.L."/>
            <person name="Dalla E."/>
            <person name="Dalrymple B.P."/>
            <person name="de Bono B."/>
            <person name="Della Gatta G."/>
            <person name="di Bernardo D."/>
            <person name="Down T."/>
            <person name="Engstrom P."/>
            <person name="Fagiolini M."/>
            <person name="Faulkner G."/>
            <person name="Fletcher C.F."/>
            <person name="Fukushima T."/>
            <person name="Furuno M."/>
            <person name="Futaki S."/>
            <person name="Gariboldi M."/>
            <person name="Georgii-Hemming P."/>
            <person name="Gingeras T.R."/>
            <person name="Gojobori T."/>
            <person name="Green R.E."/>
            <person name="Gustincich S."/>
            <person name="Harbers M."/>
            <person name="Hayashi Y."/>
            <person name="Hensch T.K."/>
            <person name="Hirokawa N."/>
            <person name="Hill D."/>
            <person name="Huminiecki L."/>
            <person name="Iacono M."/>
            <person name="Ikeo K."/>
            <person name="Iwama A."/>
            <person name="Ishikawa T."/>
            <person name="Jakt M."/>
            <person name="Kanapin A."/>
            <person name="Katoh M."/>
            <person name="Kawasawa Y."/>
            <person name="Kelso J."/>
            <person name="Kitamura H."/>
            <person name="Kitano H."/>
            <person name="Kollias G."/>
            <person name="Krishnan S.P."/>
            <person name="Kruger A."/>
            <person name="Kummerfeld S.K."/>
            <person name="Kurochkin I.V."/>
            <person name="Lareau L.F."/>
            <person name="Lazarevic D."/>
            <person name="Lipovich L."/>
            <person name="Liu J."/>
            <person name="Liuni S."/>
            <person name="McWilliam S."/>
            <person name="Madan Babu M."/>
            <person name="Madera M."/>
            <person name="Marchionni L."/>
            <person name="Matsuda H."/>
            <person name="Matsuzawa S."/>
            <person name="Miki H."/>
            <person name="Mignone F."/>
            <person name="Miyake S."/>
            <person name="Morris K."/>
            <person name="Mottagui-Tabar S."/>
            <person name="Mulder N."/>
            <person name="Nakano N."/>
            <person name="Nakauchi H."/>
            <person name="Ng P."/>
            <person name="Nilsson R."/>
            <person name="Nishiguchi S."/>
            <person name="Nishikawa S."/>
            <person name="Nori F."/>
            <person name="Ohara O."/>
            <person name="Okazaki Y."/>
            <person name="Orlando V."/>
            <person name="Pang K.C."/>
            <person name="Pavan W.J."/>
            <person name="Pavesi G."/>
            <person name="Pesole G."/>
            <person name="Petrovsky N."/>
            <person name="Piazza S."/>
            <person name="Reed J."/>
            <person name="Reid J.F."/>
            <person name="Ring B.Z."/>
            <person name="Ringwald M."/>
            <person name="Rost B."/>
            <person name="Ruan Y."/>
            <person name="Salzberg S.L."/>
            <person name="Sandelin A."/>
            <person name="Schneider C."/>
            <person name="Schoenbach C."/>
            <person name="Sekiguchi K."/>
            <person name="Semple C.A."/>
            <person name="Seno S."/>
            <person name="Sessa L."/>
            <person name="Sheng Y."/>
            <person name="Shibata Y."/>
            <person name="Shimada H."/>
            <person name="Shimada K."/>
            <person name="Silva D."/>
            <person name="Sinclair B."/>
            <person name="Sperling S."/>
            <person name="Stupka E."/>
            <person name="Sugiura K."/>
            <person name="Sultana R."/>
            <person name="Takenaka Y."/>
            <person name="Taki K."/>
            <person name="Tammoja K."/>
            <person name="Tan S.L."/>
            <person name="Tang S."/>
            <person name="Taylor M.S."/>
            <person name="Tegner J."/>
            <person name="Teichmann S.A."/>
            <person name="Ueda H.R."/>
            <person name="van Nimwegen E."/>
            <person name="Verardo R."/>
            <person name="Wei C.L."/>
            <person name="Yagi K."/>
            <person name="Yamanishi H."/>
            <person name="Zabarovsky E."/>
            <person name="Zhu S."/>
            <person name="Zimmer A."/>
            <person name="Hide W."/>
            <person name="Bult C."/>
            <person name="Grimmond S.M."/>
            <person name="Teasdale R.D."/>
            <person name="Liu E.T."/>
            <person name="Brusic V."/>
            <person name="Quackenbush J."/>
            <person name="Wahlestedt C."/>
            <person name="Mattick J.S."/>
            <person name="Hume D.A."/>
            <person name="Kai C."/>
            <person name="Sasaki D."/>
            <person name="Tomaru Y."/>
            <person name="Fukuda S."/>
            <person name="Kanamori-Katayama M."/>
            <person name="Suzuki M."/>
            <person name="Aoki J."/>
            <person name="Arakawa T."/>
            <person name="Iida J."/>
            <person name="Imamura K."/>
            <person name="Itoh M."/>
            <person name="Kato T."/>
            <person name="Kawaji H."/>
            <person name="Kawagashira N."/>
            <person name="Kawashima T."/>
            <person name="Kojima M."/>
            <person name="Kondo S."/>
            <person name="Konno H."/>
            <person name="Nakano K."/>
            <person name="Ninomiya N."/>
            <person name="Nishio T."/>
            <person name="Okada M."/>
            <person name="Plessy C."/>
            <person name="Shibata K."/>
            <person name="Shiraki T."/>
            <person name="Suzuki S."/>
            <person name="Tagami M."/>
            <person name="Waki K."/>
            <person name="Watahiki A."/>
            <person name="Okamura-Oho Y."/>
            <person name="Suzuki H."/>
            <person name="Kawai J."/>
            <person name="Hayashizaki Y."/>
        </authorList>
    </citation>
    <scope>NUCLEOTIDE SEQUENCE [LARGE SCALE MRNA]</scope>
    <source>
        <strain>C57BL/6J</strain>
        <tissue>Bone marrow</tissue>
        <tissue>Embryo</tissue>
        <tissue>Thymus</tissue>
        <tissue>Tongue</tissue>
    </source>
</reference>
<reference key="2">
    <citation type="journal article" date="2004" name="Genome Res.">
        <title>The status, quality, and expansion of the NIH full-length cDNA project: the Mammalian Gene Collection (MGC).</title>
        <authorList>
            <consortium name="The MGC Project Team"/>
        </authorList>
    </citation>
    <scope>NUCLEOTIDE SEQUENCE [LARGE SCALE MRNA]</scope>
    <source>
        <strain>FVB/N-3</strain>
        <tissue>Mammary gland</tissue>
    </source>
</reference>
<reference key="3">
    <citation type="journal article" date="2000" name="RNA">
        <title>Box C/D snoRNA-associated proteins: two pairs of evolutionarily ancient proteins and possible links to replication and transcription.</title>
        <authorList>
            <person name="Newman D.R."/>
            <person name="Kuhn J.F."/>
            <person name="Shanab G.M."/>
            <person name="Maxwell E.S."/>
        </authorList>
    </citation>
    <scope>ASSOCIATION WITH U14 BOX C/D SNORNA</scope>
</reference>
<reference key="4">
    <citation type="journal article" date="2006" name="Mol. Cell. Proteomics">
        <title>Comprehensive identification of phosphorylation sites in postsynaptic density preparations.</title>
        <authorList>
            <person name="Trinidad J.C."/>
            <person name="Specht C.G."/>
            <person name="Thalhammer A."/>
            <person name="Schoepfer R."/>
            <person name="Burlingame A.L."/>
        </authorList>
    </citation>
    <scope>PHOSPHORYLATION [LARGE SCALE ANALYSIS] AT SER-536</scope>
    <scope>IDENTIFICATION BY MASS SPECTROMETRY [LARGE SCALE ANALYSIS]</scope>
    <source>
        <tissue>Brain</tissue>
    </source>
</reference>
<reference key="5">
    <citation type="journal article" date="2007" name="Proc. Natl. Acad. Sci. U.S.A.">
        <title>Large-scale phosphorylation analysis of mouse liver.</title>
        <authorList>
            <person name="Villen J."/>
            <person name="Beausoleil S.A."/>
            <person name="Gerber S.A."/>
            <person name="Gygi S.P."/>
        </authorList>
    </citation>
    <scope>PHOSPHORYLATION [LARGE SCALE ANALYSIS] AT SER-466; THR-467; SER-513; SER-536 AND SER-543</scope>
    <scope>IDENTIFICATION BY MASS SPECTROMETRY [LARGE SCALE ANALYSIS]</scope>
    <source>
        <tissue>Liver</tissue>
    </source>
</reference>
<reference key="6">
    <citation type="journal article" date="2008" name="J. Proteome Res.">
        <title>Specific phosphopeptide enrichment with immobilized titanium ion affinity chromatography adsorbent for phosphoproteome analysis.</title>
        <authorList>
            <person name="Zhou H."/>
            <person name="Ye M."/>
            <person name="Dong J."/>
            <person name="Han G."/>
            <person name="Jiang X."/>
            <person name="Wu R."/>
            <person name="Zou H."/>
        </authorList>
    </citation>
    <scope>PHOSPHORYLATION [LARGE SCALE ANALYSIS] AT SER-513 AND SER-536</scope>
    <scope>IDENTIFICATION BY MASS SPECTROMETRY [LARGE SCALE ANALYSIS]</scope>
    <source>
        <tissue>Liver</tissue>
    </source>
</reference>
<reference key="7">
    <citation type="journal article" date="2009" name="Immunity">
        <title>The phagosomal proteome in interferon-gamma-activated macrophages.</title>
        <authorList>
            <person name="Trost M."/>
            <person name="English L."/>
            <person name="Lemieux S."/>
            <person name="Courcelles M."/>
            <person name="Desjardins M."/>
            <person name="Thibault P."/>
        </authorList>
    </citation>
    <scope>PHOSPHORYLATION [LARGE SCALE ANALYSIS] AT SER-513 AND SER-554</scope>
    <scope>IDENTIFICATION BY MASS SPECTROMETRY [LARGE SCALE ANALYSIS]</scope>
</reference>
<reference key="8">
    <citation type="journal article" date="2009" name="Mol. Cell. Proteomics">
        <title>Large scale localization of protein phosphorylation by use of electron capture dissociation mass spectrometry.</title>
        <authorList>
            <person name="Sweet S.M."/>
            <person name="Bailey C.M."/>
            <person name="Cunningham D.L."/>
            <person name="Heath J.K."/>
            <person name="Cooper H.J."/>
        </authorList>
    </citation>
    <scope>PHOSPHORYLATION [LARGE SCALE ANALYSIS] AT SER-513; SER-536 AND SER-543</scope>
    <scope>IDENTIFICATION BY MASS SPECTROMETRY [LARGE SCALE ANALYSIS]</scope>
    <source>
        <tissue>Embryonic fibroblast</tissue>
    </source>
</reference>
<reference key="9">
    <citation type="journal article" date="2010" name="Cell">
        <title>A tissue-specific atlas of mouse protein phosphorylation and expression.</title>
        <authorList>
            <person name="Huttlin E.L."/>
            <person name="Jedrychowski M.P."/>
            <person name="Elias J.E."/>
            <person name="Goswami T."/>
            <person name="Rad R."/>
            <person name="Beausoleil S.A."/>
            <person name="Villen J."/>
            <person name="Haas W."/>
            <person name="Sowa M.E."/>
            <person name="Gygi S.P."/>
        </authorList>
    </citation>
    <scope>PHOSPHORYLATION [LARGE SCALE ANALYSIS] AT SER-465; SER-466; THR-467; SER-513; SER-522; SER-528; SER-536; SER-543; THR-545; THR-546 AND SER-554</scope>
    <scope>IDENTIFICATION BY MASS SPECTROMETRY [LARGE SCALE ANALYSIS]</scope>
    <source>
        <tissue>Brain</tissue>
        <tissue>Brown adipose tissue</tissue>
        <tissue>Heart</tissue>
        <tissue>Kidney</tissue>
        <tissue>Liver</tissue>
        <tissue>Lung</tissue>
        <tissue>Pancreas</tissue>
        <tissue>Spleen</tissue>
        <tissue>Testis</tissue>
    </source>
</reference>
<reference key="10">
    <citation type="journal article" date="2011" name="Am. J. Hum. Genet.">
        <title>Expansion of intronic GGCCTG hexanucleotide repeat in NOP56 causes SCA36, a type of spinocerebellar ataxia accompanied by motor neuron involvement.</title>
        <authorList>
            <person name="Kobayashi H."/>
            <person name="Abe K."/>
            <person name="Matsuura T."/>
            <person name="Ikeda Y."/>
            <person name="Hitomi T."/>
            <person name="Akechi Y."/>
            <person name="Habu T."/>
            <person name="Liu W."/>
            <person name="Okuda H."/>
            <person name="Koizumi A."/>
        </authorList>
    </citation>
    <scope>SUBCELLULAR LOCATION</scope>
    <scope>TISSUE SPECIFICITY</scope>
</reference>
<reference key="11">
    <citation type="journal article" date="2013" name="Mol. Cell">
        <title>SIRT5-mediated lysine desuccinylation impacts diverse metabolic pathways.</title>
        <authorList>
            <person name="Park J."/>
            <person name="Chen Y."/>
            <person name="Tishkoff D.X."/>
            <person name="Peng C."/>
            <person name="Tan M."/>
            <person name="Dai L."/>
            <person name="Xie Z."/>
            <person name="Zhang Y."/>
            <person name="Zwaans B.M."/>
            <person name="Skinner M.E."/>
            <person name="Lombard D.B."/>
            <person name="Zhao Y."/>
        </authorList>
    </citation>
    <scope>ACETYLATION [LARGE SCALE ANALYSIS] AT LYS-552 AND LYS-565</scope>
    <scope>IDENTIFICATION BY MASS SPECTROMETRY [LARGE SCALE ANALYSIS]</scope>
    <source>
        <tissue>Embryonic fibroblast</tissue>
    </source>
</reference>
<proteinExistence type="evidence at protein level"/>
<feature type="chain" id="PRO_0000219027" description="Nucleolar protein 56">
    <location>
        <begin position="1"/>
        <end position="580"/>
    </location>
</feature>
<feature type="domain" description="Nop" evidence="2">
    <location>
        <begin position="292"/>
        <end position="410"/>
    </location>
</feature>
<feature type="region of interest" description="Disordered" evidence="3">
    <location>
        <begin position="458"/>
        <end position="580"/>
    </location>
</feature>
<feature type="compositionally biased region" description="Basic residues" evidence="3">
    <location>
        <begin position="567"/>
        <end position="580"/>
    </location>
</feature>
<feature type="modified residue" description="Phosphoserine" evidence="1">
    <location>
        <position position="314"/>
    </location>
</feature>
<feature type="modified residue" description="Omega-N-methylarginine" evidence="1">
    <location>
        <position position="359"/>
    </location>
</feature>
<feature type="modified residue" description="Phosphoserine" evidence="11">
    <location>
        <position position="465"/>
    </location>
</feature>
<feature type="modified residue" description="Phosphoserine" evidence="7 11">
    <location>
        <position position="466"/>
    </location>
</feature>
<feature type="modified residue" description="Phosphothreonine" evidence="7 11">
    <location>
        <position position="467"/>
    </location>
</feature>
<feature type="modified residue" description="Phosphoserine" evidence="7 8 9 10 11">
    <location>
        <position position="513"/>
    </location>
</feature>
<feature type="modified residue" description="Phosphoserine" evidence="11">
    <location>
        <position position="522"/>
    </location>
</feature>
<feature type="modified residue" description="Phosphoserine" evidence="11">
    <location>
        <position position="528"/>
    </location>
</feature>
<feature type="modified residue" description="Phosphoserine" evidence="6 7 8 9 11">
    <location>
        <position position="536"/>
    </location>
</feature>
<feature type="modified residue" description="Phosphoserine" evidence="7 9 11">
    <location>
        <position position="543"/>
    </location>
</feature>
<feature type="modified residue" description="Phosphothreonine" evidence="11">
    <location>
        <position position="545"/>
    </location>
</feature>
<feature type="modified residue" description="Phosphothreonine" evidence="11">
    <location>
        <position position="546"/>
    </location>
</feature>
<feature type="modified residue" description="N6-acetyllysine" evidence="12">
    <location>
        <position position="552"/>
    </location>
</feature>
<feature type="modified residue" description="Phosphoserine" evidence="10 11">
    <location>
        <position position="554"/>
    </location>
</feature>
<feature type="modified residue" description="N6-acetyllysine" evidence="12">
    <location>
        <position position="565"/>
    </location>
</feature>
<feature type="modified residue" description="Phosphoserine" evidence="1">
    <location>
        <position position="567"/>
    </location>
</feature>
<feature type="cross-link" description="Glycyl lysine isopeptide (Lys-Gly) (interchain with G-Cter in SUMO2)" evidence="1">
    <location>
        <position position="87"/>
    </location>
</feature>
<feature type="cross-link" description="Glycyl lysine isopeptide (Lys-Gly) (interchain with G-Cter in SUMO2)" evidence="1">
    <location>
        <position position="230"/>
    </location>
</feature>
<feature type="cross-link" description="Glycyl lysine isopeptide (Lys-Gly) (interchain with G-Cter in SUMO2)" evidence="1">
    <location>
        <position position="240"/>
    </location>
</feature>
<feature type="cross-link" description="Glycyl lysine isopeptide (Lys-Gly) (interchain with G-Cter in SUMO2)" evidence="1">
    <location>
        <position position="531"/>
    </location>
</feature>
<feature type="sequence conflict" description="In Ref. 1; BAC37015." evidence="5" ref="1">
    <original>Q</original>
    <variation>K</variation>
    <location>
        <position position="170"/>
    </location>
</feature>
<feature type="sequence conflict" description="In Ref. 1; BAB27647." evidence="5" ref="1">
    <original>I</original>
    <variation>V</variation>
    <location>
        <position position="182"/>
    </location>
</feature>
<feature type="sequence conflict" description="In Ref. 2; AAH21355." evidence="5" ref="2">
    <original>T</original>
    <variation>A</variation>
    <location>
        <position position="436"/>
    </location>
</feature>
<evidence type="ECO:0000250" key="1">
    <source>
        <dbReference type="UniProtKB" id="O00567"/>
    </source>
</evidence>
<evidence type="ECO:0000255" key="2">
    <source>
        <dbReference type="PROSITE-ProRule" id="PRU00690"/>
    </source>
</evidence>
<evidence type="ECO:0000256" key="3">
    <source>
        <dbReference type="SAM" id="MobiDB-lite"/>
    </source>
</evidence>
<evidence type="ECO:0000269" key="4">
    <source>
    </source>
</evidence>
<evidence type="ECO:0000305" key="5"/>
<evidence type="ECO:0007744" key="6">
    <source>
    </source>
</evidence>
<evidence type="ECO:0007744" key="7">
    <source>
    </source>
</evidence>
<evidence type="ECO:0007744" key="8">
    <source>
    </source>
</evidence>
<evidence type="ECO:0007744" key="9">
    <source>
    </source>
</evidence>
<evidence type="ECO:0007744" key="10">
    <source>
    </source>
</evidence>
<evidence type="ECO:0007744" key="11">
    <source>
    </source>
</evidence>
<evidence type="ECO:0007744" key="12">
    <source>
    </source>
</evidence>
<dbReference type="EMBL" id="AK009799">
    <property type="protein sequence ID" value="BAB26511.1"/>
    <property type="molecule type" value="mRNA"/>
</dbReference>
<dbReference type="EMBL" id="AK011481">
    <property type="protein sequence ID" value="BAB27647.3"/>
    <property type="molecule type" value="mRNA"/>
</dbReference>
<dbReference type="EMBL" id="AK077795">
    <property type="protein sequence ID" value="BAC37015.1"/>
    <property type="molecule type" value="mRNA"/>
</dbReference>
<dbReference type="EMBL" id="AK150258">
    <property type="protein sequence ID" value="BAE29417.1"/>
    <property type="molecule type" value="mRNA"/>
</dbReference>
<dbReference type="EMBL" id="BC002231">
    <property type="protein sequence ID" value="AAH02231.1"/>
    <property type="molecule type" value="mRNA"/>
</dbReference>
<dbReference type="EMBL" id="BC021355">
    <property type="protein sequence ID" value="AAH21355.1"/>
    <property type="molecule type" value="mRNA"/>
</dbReference>
<dbReference type="CCDS" id="CCDS16737.1"/>
<dbReference type="RefSeq" id="NP_077155.2">
    <property type="nucleotide sequence ID" value="NM_024193.2"/>
</dbReference>
<dbReference type="SMR" id="Q9D6Z1"/>
<dbReference type="BioGRID" id="211966">
    <property type="interactions" value="14"/>
</dbReference>
<dbReference type="CORUM" id="Q9D6Z1"/>
<dbReference type="FunCoup" id="Q9D6Z1">
    <property type="interactions" value="3062"/>
</dbReference>
<dbReference type="IntAct" id="Q9D6Z1">
    <property type="interactions" value="11"/>
</dbReference>
<dbReference type="STRING" id="10090.ENSMUSP00000099487"/>
<dbReference type="ChEMBL" id="CHEMBL4879510"/>
<dbReference type="GlyGen" id="Q9D6Z1">
    <property type="glycosylation" value="4 sites, 2 N-linked glycans (2 sites), 1 O-linked glycan (2 sites)"/>
</dbReference>
<dbReference type="iPTMnet" id="Q9D6Z1"/>
<dbReference type="PhosphoSitePlus" id="Q9D6Z1"/>
<dbReference type="SwissPalm" id="Q9D6Z1"/>
<dbReference type="jPOST" id="Q9D6Z1"/>
<dbReference type="PaxDb" id="10090-ENSMUSP00000099487"/>
<dbReference type="PeptideAtlas" id="Q9D6Z1"/>
<dbReference type="ProteomicsDB" id="293703"/>
<dbReference type="Pumba" id="Q9D6Z1"/>
<dbReference type="Antibodypedia" id="23219">
    <property type="antibodies" value="124 antibodies from 26 providers"/>
</dbReference>
<dbReference type="DNASU" id="67134"/>
<dbReference type="Ensembl" id="ENSMUST00000103198.11">
    <property type="protein sequence ID" value="ENSMUSP00000099487.5"/>
    <property type="gene ID" value="ENSMUSG00000027405.17"/>
</dbReference>
<dbReference type="GeneID" id="67134"/>
<dbReference type="KEGG" id="mmu:67134"/>
<dbReference type="UCSC" id="uc008mil.1">
    <property type="organism name" value="mouse"/>
</dbReference>
<dbReference type="AGR" id="MGI:1914384"/>
<dbReference type="CTD" id="10528"/>
<dbReference type="MGI" id="MGI:1914384">
    <property type="gene designation" value="Nop56"/>
</dbReference>
<dbReference type="VEuPathDB" id="HostDB:ENSMUSG00000027405"/>
<dbReference type="eggNOG" id="KOG2573">
    <property type="taxonomic scope" value="Eukaryota"/>
</dbReference>
<dbReference type="GeneTree" id="ENSGT00940000153534"/>
<dbReference type="HOGENOM" id="CLU_015495_4_1_1"/>
<dbReference type="InParanoid" id="Q9D6Z1"/>
<dbReference type="OMA" id="PDNYMFA"/>
<dbReference type="OrthoDB" id="6780543at2759"/>
<dbReference type="PhylomeDB" id="Q9D6Z1"/>
<dbReference type="TreeFam" id="TF105713"/>
<dbReference type="Reactome" id="R-MMU-6791226">
    <property type="pathway name" value="Major pathway of rRNA processing in the nucleolus and cytosol"/>
</dbReference>
<dbReference type="BioGRID-ORCS" id="67134">
    <property type="hits" value="27 hits in 80 CRISPR screens"/>
</dbReference>
<dbReference type="ChiTaRS" id="Nop56">
    <property type="organism name" value="mouse"/>
</dbReference>
<dbReference type="PRO" id="PR:Q9D6Z1"/>
<dbReference type="Proteomes" id="UP000000589">
    <property type="component" value="Chromosome 2"/>
</dbReference>
<dbReference type="RNAct" id="Q9D6Z1">
    <property type="molecule type" value="protein"/>
</dbReference>
<dbReference type="Bgee" id="ENSMUSG00000027405">
    <property type="expression patterns" value="Expressed in embryonic post-anal tail and 75 other cell types or tissues"/>
</dbReference>
<dbReference type="ExpressionAtlas" id="Q9D6Z1">
    <property type="expression patterns" value="baseline and differential"/>
</dbReference>
<dbReference type="GO" id="GO:0031428">
    <property type="term" value="C:box C/D methylation guide snoRNP complex"/>
    <property type="evidence" value="ECO:0000250"/>
    <property type="project" value="UniProtKB"/>
</dbReference>
<dbReference type="GO" id="GO:0005737">
    <property type="term" value="C:cytoplasm"/>
    <property type="evidence" value="ECO:0007669"/>
    <property type="project" value="UniProtKB-SubCell"/>
</dbReference>
<dbReference type="GO" id="GO:0001650">
    <property type="term" value="C:fibrillar center"/>
    <property type="evidence" value="ECO:0007669"/>
    <property type="project" value="Ensembl"/>
</dbReference>
<dbReference type="GO" id="GO:0005654">
    <property type="term" value="C:nucleoplasm"/>
    <property type="evidence" value="ECO:0007669"/>
    <property type="project" value="UniProtKB-SubCell"/>
</dbReference>
<dbReference type="GO" id="GO:0070761">
    <property type="term" value="C:pre-snoRNP complex"/>
    <property type="evidence" value="ECO:0007669"/>
    <property type="project" value="Ensembl"/>
</dbReference>
<dbReference type="GO" id="GO:0032040">
    <property type="term" value="C:small-subunit processome"/>
    <property type="evidence" value="ECO:0000250"/>
    <property type="project" value="UniProtKB"/>
</dbReference>
<dbReference type="GO" id="GO:1990226">
    <property type="term" value="F:histone methyltransferase binding"/>
    <property type="evidence" value="ECO:0007669"/>
    <property type="project" value="Ensembl"/>
</dbReference>
<dbReference type="GO" id="GO:0003723">
    <property type="term" value="F:RNA binding"/>
    <property type="evidence" value="ECO:0000353"/>
    <property type="project" value="MGI"/>
</dbReference>
<dbReference type="GO" id="GO:0030515">
    <property type="term" value="F:snoRNA binding"/>
    <property type="evidence" value="ECO:0007669"/>
    <property type="project" value="Ensembl"/>
</dbReference>
<dbReference type="GO" id="GO:0042274">
    <property type="term" value="P:ribosomal small subunit biogenesis"/>
    <property type="evidence" value="ECO:0000250"/>
    <property type="project" value="UniProtKB"/>
</dbReference>
<dbReference type="FunFam" id="1.10.246.90:FF:000001">
    <property type="entry name" value="Nucleolar protein 56"/>
    <property type="match status" value="1"/>
</dbReference>
<dbReference type="FunFam" id="1.10.287.4070:FF:000002">
    <property type="entry name" value="Nucleolar protein 56"/>
    <property type="match status" value="1"/>
</dbReference>
<dbReference type="Gene3D" id="1.10.287.4070">
    <property type="match status" value="1"/>
</dbReference>
<dbReference type="Gene3D" id="1.10.246.90">
    <property type="entry name" value="Nop domain"/>
    <property type="match status" value="1"/>
</dbReference>
<dbReference type="InterPro" id="IPR045056">
    <property type="entry name" value="Nop56/Nop58"/>
</dbReference>
<dbReference type="InterPro" id="IPR012974">
    <property type="entry name" value="NOP58/56_N"/>
</dbReference>
<dbReference type="InterPro" id="IPR042239">
    <property type="entry name" value="Nop_C"/>
</dbReference>
<dbReference type="InterPro" id="IPR002687">
    <property type="entry name" value="Nop_dom"/>
</dbReference>
<dbReference type="InterPro" id="IPR036070">
    <property type="entry name" value="Nop_dom_sf"/>
</dbReference>
<dbReference type="InterPro" id="IPR012976">
    <property type="entry name" value="NOSIC"/>
</dbReference>
<dbReference type="PANTHER" id="PTHR10894">
    <property type="entry name" value="NUCLEOLAR PROTEIN 5 NUCLEOLAR PROTEIN NOP5 NOP58"/>
    <property type="match status" value="1"/>
</dbReference>
<dbReference type="PANTHER" id="PTHR10894:SF0">
    <property type="entry name" value="NUCLEOLAR PROTEIN 56"/>
    <property type="match status" value="1"/>
</dbReference>
<dbReference type="Pfam" id="PF01798">
    <property type="entry name" value="Nop"/>
    <property type="match status" value="1"/>
</dbReference>
<dbReference type="Pfam" id="PF08156">
    <property type="entry name" value="NOP5NT"/>
    <property type="match status" value="1"/>
</dbReference>
<dbReference type="SMART" id="SM00931">
    <property type="entry name" value="NOSIC"/>
    <property type="match status" value="1"/>
</dbReference>
<dbReference type="SUPFAM" id="SSF89124">
    <property type="entry name" value="Nop domain"/>
    <property type="match status" value="1"/>
</dbReference>
<dbReference type="PROSITE" id="PS51358">
    <property type="entry name" value="NOP"/>
    <property type="match status" value="1"/>
</dbReference>
<accession>Q9D6Z1</accession>
<accession>Q3UD45</accession>
<accession>Q8BVL1</accession>
<accession>Q8VDT2</accession>
<accession>Q99LT8</accession>
<accession>Q9CT15</accession>
<sequence length="580" mass="64464">MVLLHVLFEHAVGYALLALKEVEEISLLLPQVEECVLNLGKFHNVVRLVAFCPFSSSQVALENANAVSEGVVHEDLRLLLETYLPSKKKKVLLGVGDPKIGAAIQEELGYNCQTGGVIAEILRGVRLHFHNLVKGLTDLSACKAQLGLGHSYSRAKVKFNVNRVDNMIIQSISLLDQLDKDINTFSMRVREWYGYHFPELVKIVNDNATYCRLAQFIGNRRELNEEKLEKLEEITMDGAKAKAILDASRSSMGMDISAIDLINIESFSSRVVSLSEYRQSLHTYLRSKMSQVAPSLSALIGEAVGARLIAHAGSLTNLAKYPASTVQILGAEKALFRALKTRGNTPKYGLIFHSTFIGRAAAKNKGRISRYLANKCSIASRIDCFSEVPTSVFGEKLREQVEERLSFYETGEIPRKNLDVMKEAVVQAEEAAAEITRKLEKQEKKRLKKEKKRLAALALASSENSSTPEECEEVNEKSKKKKKLKPQENGMEDPPVSLPKSKKKKAPKEELASDLEEMATSSAKRKKSSPKEEVASEPEEAASPTTPKKKRKFSEEPEVAANFTKSSTKKKKKSQKAQED</sequence>
<gene>
    <name type="primary">Nop56</name>
    <name type="synonym">Nol5a</name>
</gene>
<comment type="function">
    <text evidence="1">Involved in the early to middle stages of 60S ribosomal subunit biogenesis. Required for the biogenesis of box C/D snoRNAs such U3, U8 and U14 snoRNAs. Part of the small subunit (SSU) processome, first precursor of the small eukaryotic ribosomal subunit. During the assembly of the SSU processome in the nucleolus, many ribosome biogenesis factors, an RNA chaperone and ribosomal proteins associate with the nascent pre-rRNA and work in concert to generate RNA folding, modifications, rearrangements and cleavage as well as targeted degradation of pre-ribosomal RNA by the RNA exosome. Core component of box C/D small nucleolar ribonucleoprotein (snoRNP) complexes that function in methylation of multiple sites on ribosomal RNAs (rRNAs) and messenger RNAs (mRNAs).</text>
</comment>
<comment type="subunit">
    <text evidence="1">Part of a large pre-ribosomal ribonucleoprotein (RNP) complex, that consists of at least 62 ribosomal proteins, 45 nonribosomal proteins and both pre-rRNA and mature rRNA species. Within this complex directly interacts with TCOF1 in an RNA-independent manner. Core component of box C/D small nucleolar ribonucleoprotein (snoRNP) particles; the core proteins SNU13, NOP56, NOP58 and FBL or FBLL1 assemble stepwise onto the snoRNA. Interacts with NOP1 and NOP58. Interacts with NUFIP1, RUVBL1 and RUVBL2; RUVBL1:RUVBL2 seem to bridge the association of NOP56 with NUFIP1. Part of the small subunit (SSU) processome, composed of more than 70 proteins and the RNA chaperone small nucleolar RNA (snoRNA) U3. Interacts with NOP2 and FBL.</text>
</comment>
<comment type="subcellular location">
    <subcellularLocation>
        <location evidence="1">Nucleus</location>
        <location evidence="1">Nucleolus</location>
    </subcellularLocation>
    <subcellularLocation>
        <location evidence="4">Cytoplasm</location>
    </subcellularLocation>
    <subcellularLocation>
        <location evidence="1">Nucleus</location>
        <location evidence="1">Nucleoplasm</location>
    </subcellularLocation>
</comment>
<comment type="tissue specificity">
    <text evidence="4">Widely expressed, with highest levels in the central nervous system (CNS), including cerebral cortex and cerebellum, and spleen. In the CNS, expressed in Purkinje cells of the cerebellum, as well as in motor neurons of the hypoglossal nucleus and in the spinal cord anterior horn (at protein level).</text>
</comment>
<comment type="similarity">
    <text evidence="5">Belongs to the NOP5/NOP56 family.</text>
</comment>